<sequence length="4246" mass="481243">MFESIVSNLLTRYLKEYIKALNTDNLNISIWSGNVSLENLELKSRALEKFNLPFTIKEGFLGKLSLKIPWNNLKTEPVIVVIDQLYITASPKSTTVWNEEDEDLLLQKKLKKLKIYEALKEEKRKKQQQLKEKREIRNNLIKEKRLQKKQIKNQLKQQLRQRKKDAKNASPVNSNNNNNNNSNLVSESNIPSSSSSSSSSLYDDDDNSSKDANKSDDTDMDVDDDDEFQEATEGDYDNEEEQDDHDEEDDLSDDDDDDDDEEDDYEMEDEDDVYKTLVDNQGNENDSQSGGLIDSSSFAEKLRNKIVDNLQIMIYNVHIRFEDSVTNPTTPYCFGVTLEHLLAQSSNEEWKPSFIHTPHTLVHKLITLQNLSIYWDADNDKPDLNYKSISEFKSLMTKLIPKKSSPSTTTTTPPISPPPKETQLIKPQHNYLLHPVCGSLKLLINKSIIPNKYIPLYTANFEFDEINLELESKQYSGILALVDWFTTQKKGERYRKFKTKESGGVLKTAKDRWEFAGKCILADVRDKIRKWTPQFFDKRRKDRLDYIHLYKLKKRKKTLSDLNTTKLNSLEKEYSFEDLVYFRSLADAQLKAEDNHQQQQKQQQQQQQQQSNISPKIISSNKNNNNDSSSGSSSNNNNSSTTSTTSTTTSSSSSSNSTDSKDIMKSSGDKNVNNNNNMGDNENKDNIDKKEENKNDDQDNKNKNKNKIITTISHKKNKSKDDQNSGGWFKWFGWGSSNKSKQQQQQQDESEDQDSSILGTLDITDQQKRELYSTIEYDEHQKSKNIVYPKDYVKTRINFTMNRGSVAFRLQPPNSPITHFSSKSPPSSKGNADLMIELVRMSVAVDKFVGSLYVQAILETIYVRDFFTKDTQFPILMKPIVVKNNTFVNSSSRTLPYSNSEGVEDINKDYLSIVSSSPSPVSSPSRDKRLEEETKQEDEKEKKLNVDKNLKCSLSSIEKVSCDKKSKDDCSSGGSGGVDNGGEEGDDKYSTKGTTESREESDGSGDYENNTNDEKQPLFSMTLQQNPLNSESDFSIFIEALPLEVVYNKSMMDAILEFFGNAPSDTLKEIEEAARNQIKIFKDKTTLRIQHELENHKSIDLDININAPHVLIPESFTIPSAPILVLDLGSFSVQSVVTHKDDTLSEEIEISSILKNDFSIIQQQQQQQQQQQQQQQQQQQQQQQQQQQQQQIPIQPQSQQQQQQQQQQQQQSQQQQQAQQQAQQQQQSQHPSSNDDNSSSNGGCSVDIKSPSVNTSIISDNSVYDEENVTKYLYDLFELKLNNIQFYIASQGESLQLVEKFDINFKIYKCIIKSQTLLSKLKLFGGLPSLNMLLSQKSIEILINIISTLQNDPPEISTHFSSKKNAEDENNNSNLDRVDFETVIHDQEVDIEEYYNGVNSDDDNNDDENDKTTQDDQDDKEKSSGNDDSLKKKSKKPKLKKEGSFILESMDLEHTQDQLPILMIYNTILEVSFSVTTVSLQVVEDDKPFIRMILSDISAQVLKRTFDTSIKLSLAKLSIEDLYQDFKNESFKYLANSSIDNNQQPLQSELENSSGIEREEHLISISISSVQRNSPQYSGISQQIDVSFNTLFVNINKKLVIKIMNLVDFVEKTIVETVMKRREKRKRLEKDKDNQPLPTSESNQQSIPQKQQQQQQQQQQQQQQQQQQQQQPPPPLQKQKSQSHINLGKAFENSTFKIDKDNSIVIITTKMKSLVVNLNEDDQSYFALTVSDLSINFDIDLESSMMRFKLGNLTISDISKEASKDLNPLFGTDGEHIIEFYVYTLKNSKPLETITTTATAKITLDNETKETISTTLFEKVKEKPPSSPLKDSTSILQDENEIFDTKIGVRMSSVKLIVVRSLIDRIIDYFEEFAPNQIDQILADSAKGAVEIMSTRRINQQKRILFEVDVNTPRIIFPKNHYSPYVIIADLGHISVFNKYKSNLTNSNGGDNTILSSEQVFVYASSVNFHACKFQNGKVLESTIEPISNKINVHVNIESFLNPSLLEEDQLDEPKQKVDGEISPINLKISDQQYSLTIAIIKSLIEPTIKQKKRKKRNHRRIESQLNLDNLYQNFLNVASSNQDFKSVDVPIGLPLPTPILESLHDHKSSSSSSSSSPPPPPPPSSSQQQQQQIIKSLDSIKDQITFHLPHISLEFFRKNKESVVSFEIDEFECSLIEYDNGNEYSNFSLGSIDLTDTRKSTVNHFRRIIHHSKEKNQQSADGSGLSPPLSKDEKEKKEMKKELQVYVFEKRGGDTQVKLILDHFRGVIVPESLISMIDFIMPGIKALSSLSEISPVSSPVLNVDTMNNNPHLFGRDPLKSTVKAMLEEKNKKRMTTNTVVHIETSNIDLSFVDNPATRESRLLIARGSLFGKVTIQKSDSLTYKDIQLCIDEFILFKCRADNFDQTIESIIDPLSITTNISMVEGKDYLPIDILIAVDPMHISISFQDLLLFLSLSKNIESLINSLNNLQQQHQQQNNNSNNNNNNNNNNNNNNNNNNNNNNNNNNDDKSKQEQQILRVNFQSPSVELTVINDYGNKYCGIIDLKIRDISVEVAQNRVLFAMFIAANYFNVSKSVWEPMIEEWGCKFGIETSEIGTKDQSKNIVISSSGKLNLNITKSLFDTFTTIYPLIEIAMDISKADSTQSAYDLGYKTGVNNNLLQHYKSQNYHPFLLKNQTGLEIQYQISIICASSFGDTQSNDFVGLSTSTSPSTSTTTTSTSTSTSTSTSTSTSTSTSTSTSTSTSNPTTSSKTQTTKNKILEDGGEIYLDLKETLYSNGNTNQEKDKFRSINNAQKYRDITSISLFRINIVVDGFEAISNLPIHKTGIYICSLIPKVNVSSSTKSLPSQQLVFEVRVSDFTKELIVRSNVLIVNETDHTLEYLDKPTHTLRKVCPFILEPKQSKSLSICGGNSSSSSSSSSSSTTDMIFSFRPMIHQSFSSSANLGNNQQRWTHPLNCNNGLLHPGTLLFDCPPNKFYCLQIDQHLSNFQLEDQQINPLTGGTIPQHQPSYHHISNQQYYENSMVNDENQDNQSSSSMNRIIQKTNHIIKIVPPLVIYNQFIIPIDITLHDQESNRTVGKESIQENQTKGIYCVNVERLIMIKVHMKGFGSSGFIQINQSSQNYINKQPRKLISTTSDQTFFVNIFQNELFGSIHVCLYPTFSIINQIGLNLSFKLNNLSDNNNNNNNNNNNNNNTIHDQPVIIASVFNSQTFSNLLTKNTPKNKTTTTTTTTAATTKPIQGTIDYKKDPKKWYNDKNISQISMFSPIPSNVGTSNNTSYLVLQVDGNSQWSQPISIQPNKQEPITIIKEQKESPTSSKITKLSLQFLISTSIANESLTTNITVDPQFILVNNLAQPLYYCQKDSNLYKNYCLNPNETIPFHFFDDQLLKKIAFRLSPNNDWSGCFNINKSISFNIKLDKPIDDDQDSDSDSGSSNSSSPSISSSSTSPLNLSSSSAFSNCSSNNNNNNGGGGGSSDDQFYLPMIQMVQEKGIYFVVVNPETKDYPPYRVENLISVPIAIHQVDTNEQPIPIFSNQSKRYVWSNPMGTKRLGITIPNTNYKKSVSLDKLQYHQPYQVKHSNKTLDIKLDIIANGPTNILRLTDLNDHNSISKTLNNNNNNNNNNNNNNLNSVTKDNNNNNNQNNNNQNNNNQNNNNLNFEICIGGISVSLIDGHPKELMYITLRGLQLRFKQYSTEQNINLSIHSFKVDNQLYHTPYPVMIQSYNSNNLKPTKHSFNVSLIRSGQYQPKELHQVGIEYIKELNFDIQPFDVEIDETILFHLYNFIKSIKLPNNQNNNNNQNNNNQNNDFNNIDEYDEKEKNDGKIIKSIKLPYSNLPIPHSIDSKRLYIEVLNLPLVDVTISYCLSPHSRPLIGPWASVFSTIANIDKASLHLGSWKLEHQFVTANALALSLFSHYKWEVSKILLYSDVFGAPLSLVENITRGINDFIYESKEGLNNPENFGKGLVKGTKSLVSNSIYGIFNSASKLTNTVGSAIAPFSMDENYLAQRDRHTQPKHAIDGVSNGIGRFTQGLAHGLSGLFDQPVKEFQDQGFSGLVKGFGKGILGTVVKPTVGAIDMINAATQGIRNSYLDPASSKSRSRPPRFIGPDAIIKPFSFEKSFLQQVIKTTNTHQSLLSSKEWYIIHFKVYDEKKTPYYLVISTQKFYLFDFKFNFILSIKLWDLDLSLKPKDDRYLSIQEIKKDDESPRNPTYVLLLDQDGKSISYSLLNSMHNIISTIKLDQTYFVSN</sequence>
<evidence type="ECO:0000250" key="1">
    <source>
        <dbReference type="UniProtKB" id="Q07878"/>
    </source>
</evidence>
<evidence type="ECO:0000250" key="2">
    <source>
        <dbReference type="UniProtKB" id="Q96RL7"/>
    </source>
</evidence>
<evidence type="ECO:0000255" key="3"/>
<evidence type="ECO:0000256" key="4">
    <source>
        <dbReference type="SAM" id="MobiDB-lite"/>
    </source>
</evidence>
<evidence type="ECO:0000305" key="5"/>
<organism>
    <name type="scientific">Dictyostelium discoideum</name>
    <name type="common">Social amoeba</name>
    <dbReference type="NCBI Taxonomy" id="44689"/>
    <lineage>
        <taxon>Eukaryota</taxon>
        <taxon>Amoebozoa</taxon>
        <taxon>Evosea</taxon>
        <taxon>Eumycetozoa</taxon>
        <taxon>Dictyostelia</taxon>
        <taxon>Dictyosteliales</taxon>
        <taxon>Dictyosteliaceae</taxon>
        <taxon>Dictyostelium</taxon>
    </lineage>
</organism>
<gene>
    <name type="primary">vps13F</name>
    <name type="ORF">DDB_G0287055</name>
</gene>
<reference key="1">
    <citation type="journal article" date="2005" name="Nature">
        <title>The genome of the social amoeba Dictyostelium discoideum.</title>
        <authorList>
            <person name="Eichinger L."/>
            <person name="Pachebat J.A."/>
            <person name="Gloeckner G."/>
            <person name="Rajandream M.A."/>
            <person name="Sucgang R."/>
            <person name="Berriman M."/>
            <person name="Song J."/>
            <person name="Olsen R."/>
            <person name="Szafranski K."/>
            <person name="Xu Q."/>
            <person name="Tunggal B."/>
            <person name="Kummerfeld S."/>
            <person name="Madera M."/>
            <person name="Konfortov B.A."/>
            <person name="Rivero F."/>
            <person name="Bankier A.T."/>
            <person name="Lehmann R."/>
            <person name="Hamlin N."/>
            <person name="Davies R."/>
            <person name="Gaudet P."/>
            <person name="Fey P."/>
            <person name="Pilcher K."/>
            <person name="Chen G."/>
            <person name="Saunders D."/>
            <person name="Sodergren E.J."/>
            <person name="Davis P."/>
            <person name="Kerhornou A."/>
            <person name="Nie X."/>
            <person name="Hall N."/>
            <person name="Anjard C."/>
            <person name="Hemphill L."/>
            <person name="Bason N."/>
            <person name="Farbrother P."/>
            <person name="Desany B."/>
            <person name="Just E."/>
            <person name="Morio T."/>
            <person name="Rost R."/>
            <person name="Churcher C.M."/>
            <person name="Cooper J."/>
            <person name="Haydock S."/>
            <person name="van Driessche N."/>
            <person name="Cronin A."/>
            <person name="Goodhead I."/>
            <person name="Muzny D.M."/>
            <person name="Mourier T."/>
            <person name="Pain A."/>
            <person name="Lu M."/>
            <person name="Harper D."/>
            <person name="Lindsay R."/>
            <person name="Hauser H."/>
            <person name="James K.D."/>
            <person name="Quiles M."/>
            <person name="Madan Babu M."/>
            <person name="Saito T."/>
            <person name="Buchrieser C."/>
            <person name="Wardroper A."/>
            <person name="Felder M."/>
            <person name="Thangavelu M."/>
            <person name="Johnson D."/>
            <person name="Knights A."/>
            <person name="Loulseged H."/>
            <person name="Mungall K.L."/>
            <person name="Oliver K."/>
            <person name="Price C."/>
            <person name="Quail M.A."/>
            <person name="Urushihara H."/>
            <person name="Hernandez J."/>
            <person name="Rabbinowitsch E."/>
            <person name="Steffen D."/>
            <person name="Sanders M."/>
            <person name="Ma J."/>
            <person name="Kohara Y."/>
            <person name="Sharp S."/>
            <person name="Simmonds M.N."/>
            <person name="Spiegler S."/>
            <person name="Tivey A."/>
            <person name="Sugano S."/>
            <person name="White B."/>
            <person name="Walker D."/>
            <person name="Woodward J.R."/>
            <person name="Winckler T."/>
            <person name="Tanaka Y."/>
            <person name="Shaulsky G."/>
            <person name="Schleicher M."/>
            <person name="Weinstock G.M."/>
            <person name="Rosenthal A."/>
            <person name="Cox E.C."/>
            <person name="Chisholm R.L."/>
            <person name="Gibbs R.A."/>
            <person name="Loomis W.F."/>
            <person name="Platzer M."/>
            <person name="Kay R.R."/>
            <person name="Williams J.G."/>
            <person name="Dear P.H."/>
            <person name="Noegel A.A."/>
            <person name="Barrell B.G."/>
            <person name="Kuspa A."/>
        </authorList>
    </citation>
    <scope>NUCLEOTIDE SEQUENCE [LARGE SCALE GENOMIC DNA]</scope>
    <source>
        <strain>AX4</strain>
    </source>
</reference>
<name>VP13F_DICDI</name>
<protein>
    <recommendedName>
        <fullName evidence="2">Intermembrane lipid transfer protein vps13F</fullName>
    </recommendedName>
    <alternativeName>
        <fullName>Putative vacuolar protein sorting-associated protein 13F</fullName>
    </alternativeName>
</protein>
<keyword id="KW-0472">Membrane</keyword>
<keyword id="KW-0653">Protein transport</keyword>
<keyword id="KW-1185">Reference proteome</keyword>
<keyword id="KW-0813">Transport</keyword>
<dbReference type="EMBL" id="AAFI02000096">
    <property type="protein sequence ID" value="EAL63892.1"/>
    <property type="molecule type" value="Genomic_DNA"/>
</dbReference>
<dbReference type="RefSeq" id="XP_637397.1">
    <property type="nucleotide sequence ID" value="XM_632305.1"/>
</dbReference>
<dbReference type="SMR" id="Q54KX3"/>
<dbReference type="STRING" id="44689.Q54KX3"/>
<dbReference type="GlyGen" id="Q54KX3">
    <property type="glycosylation" value="1 site"/>
</dbReference>
<dbReference type="PaxDb" id="44689-DDB0304549"/>
<dbReference type="ABCD" id="Q54KX3">
    <property type="antibodies" value="5 sequenced antibodies"/>
</dbReference>
<dbReference type="EnsemblProtists" id="EAL63892">
    <property type="protein sequence ID" value="EAL63892"/>
    <property type="gene ID" value="DDB_G0287055"/>
</dbReference>
<dbReference type="GeneID" id="8625928"/>
<dbReference type="KEGG" id="ddi:DDB_G0287055"/>
<dbReference type="dictyBase" id="DDB_G0287055">
    <property type="gene designation" value="vps13F"/>
</dbReference>
<dbReference type="VEuPathDB" id="AmoebaDB:DDB_G0287055"/>
<dbReference type="eggNOG" id="KOG1809">
    <property type="taxonomic scope" value="Eukaryota"/>
</dbReference>
<dbReference type="HOGENOM" id="CLU_223857_0_0_1"/>
<dbReference type="InParanoid" id="Q54KX3"/>
<dbReference type="OMA" id="MRFKLGN"/>
<dbReference type="PhylomeDB" id="Q54KX3"/>
<dbReference type="PRO" id="PR:Q54KX3"/>
<dbReference type="Proteomes" id="UP000002195">
    <property type="component" value="Chromosome 4"/>
</dbReference>
<dbReference type="GO" id="GO:0016020">
    <property type="term" value="C:membrane"/>
    <property type="evidence" value="ECO:0007669"/>
    <property type="project" value="UniProtKB-SubCell"/>
</dbReference>
<dbReference type="GO" id="GO:0050829">
    <property type="term" value="P:defense response to Gram-negative bacterium"/>
    <property type="evidence" value="ECO:0000315"/>
    <property type="project" value="dictyBase"/>
</dbReference>
<dbReference type="GO" id="GO:0016045">
    <property type="term" value="P:detection of bacterium"/>
    <property type="evidence" value="ECO:0000315"/>
    <property type="project" value="dictyBase"/>
</dbReference>
<dbReference type="GO" id="GO:0045053">
    <property type="term" value="P:protein retention in Golgi apparatus"/>
    <property type="evidence" value="ECO:0000318"/>
    <property type="project" value="GO_Central"/>
</dbReference>
<dbReference type="GO" id="GO:0006623">
    <property type="term" value="P:protein targeting to vacuole"/>
    <property type="evidence" value="ECO:0000318"/>
    <property type="project" value="GO_Central"/>
</dbReference>
<dbReference type="GO" id="GO:0051593">
    <property type="term" value="P:response to folic acid"/>
    <property type="evidence" value="ECO:0000315"/>
    <property type="project" value="dictyBase"/>
</dbReference>
<dbReference type="InterPro" id="IPR026847">
    <property type="entry name" value="VPS13"/>
</dbReference>
<dbReference type="InterPro" id="IPR056748">
    <property type="entry name" value="VPS13-like_C"/>
</dbReference>
<dbReference type="InterPro" id="IPR056747">
    <property type="entry name" value="VPS13-like_M"/>
</dbReference>
<dbReference type="InterPro" id="IPR026854">
    <property type="entry name" value="VPS13_N"/>
</dbReference>
<dbReference type="PANTHER" id="PTHR16166:SF97">
    <property type="entry name" value="INTERMEMBRANE LIPID TRANSFER PROTEIN VPS13F"/>
    <property type="match status" value="1"/>
</dbReference>
<dbReference type="PANTHER" id="PTHR16166">
    <property type="entry name" value="VACUOLAR PROTEIN SORTING-ASSOCIATED PROTEIN VPS13"/>
    <property type="match status" value="1"/>
</dbReference>
<dbReference type="Pfam" id="PF25037">
    <property type="entry name" value="VPS13_C"/>
    <property type="match status" value="1"/>
</dbReference>
<dbReference type="Pfam" id="PF25033">
    <property type="entry name" value="VPS13_M"/>
    <property type="match status" value="1"/>
</dbReference>
<dbReference type="Pfam" id="PF12624">
    <property type="entry name" value="VPS13_N"/>
    <property type="match status" value="1"/>
</dbReference>
<dbReference type="SUPFAM" id="SSF81995">
    <property type="entry name" value="beta-sandwich domain of Sec23/24"/>
    <property type="match status" value="1"/>
</dbReference>
<accession>Q54KX3</accession>
<proteinExistence type="inferred from homology"/>
<comment type="function">
    <text evidence="1">Mediates the transfer of lipids between membranes at organelle contact sites.</text>
</comment>
<comment type="subcellular location">
    <subcellularLocation>
        <location evidence="5">Membrane</location>
        <topology evidence="5">Peripheral membrane protein</topology>
    </subcellularLocation>
</comment>
<comment type="similarity">
    <text evidence="5">Belongs to the VPS13 family.</text>
</comment>
<feature type="chain" id="PRO_0000366144" description="Intermembrane lipid transfer protein vps13F">
    <location>
        <begin position="1"/>
        <end position="4246"/>
    </location>
</feature>
<feature type="domain" description="Chorein N-terminal" evidence="3">
    <location>
        <begin position="2"/>
        <end position="113"/>
    </location>
</feature>
<feature type="region of interest" description="Disordered" evidence="4">
    <location>
        <begin position="141"/>
        <end position="271"/>
    </location>
</feature>
<feature type="region of interest" description="Disordered" evidence="4">
    <location>
        <begin position="401"/>
        <end position="420"/>
    </location>
</feature>
<feature type="region of interest" description="Disordered" evidence="4">
    <location>
        <begin position="591"/>
        <end position="759"/>
    </location>
</feature>
<feature type="region of interest" description="Disordered" evidence="4">
    <location>
        <begin position="914"/>
        <end position="944"/>
    </location>
</feature>
<feature type="region of interest" description="Disordered" evidence="4">
    <location>
        <begin position="964"/>
        <end position="1014"/>
    </location>
</feature>
<feature type="region of interest" description="Disordered" evidence="4">
    <location>
        <begin position="1217"/>
        <end position="1251"/>
    </location>
</feature>
<feature type="region of interest" description="Disordered" evidence="4">
    <location>
        <begin position="1356"/>
        <end position="1379"/>
    </location>
</feature>
<feature type="region of interest" description="Disordered" evidence="4">
    <location>
        <begin position="1395"/>
        <end position="1436"/>
    </location>
</feature>
<feature type="region of interest" description="Disordered" evidence="4">
    <location>
        <begin position="1622"/>
        <end position="1683"/>
    </location>
</feature>
<feature type="region of interest" description="Disordered" evidence="4">
    <location>
        <begin position="2101"/>
        <end position="2131"/>
    </location>
</feature>
<feature type="region of interest" description="Disordered" evidence="4">
    <location>
        <begin position="2211"/>
        <end position="2237"/>
    </location>
</feature>
<feature type="region of interest" description="Disordered" evidence="4">
    <location>
        <begin position="2471"/>
        <end position="2513"/>
    </location>
</feature>
<feature type="region of interest" description="Disordered" evidence="4">
    <location>
        <begin position="2704"/>
        <end position="2756"/>
    </location>
</feature>
<feature type="region of interest" description="Disordered" evidence="4">
    <location>
        <begin position="3421"/>
        <end position="3449"/>
    </location>
</feature>
<feature type="region of interest" description="Disordered" evidence="4">
    <location>
        <begin position="3611"/>
        <end position="3652"/>
    </location>
</feature>
<feature type="region of interest" description="Disordered" evidence="4">
    <location>
        <begin position="3794"/>
        <end position="3813"/>
    </location>
</feature>
<feature type="compositionally biased region" description="Low complexity" evidence="4">
    <location>
        <begin position="168"/>
        <end position="201"/>
    </location>
</feature>
<feature type="compositionally biased region" description="Basic and acidic residues" evidence="4">
    <location>
        <begin position="207"/>
        <end position="217"/>
    </location>
</feature>
<feature type="compositionally biased region" description="Acidic residues" evidence="4">
    <location>
        <begin position="218"/>
        <end position="271"/>
    </location>
</feature>
<feature type="compositionally biased region" description="Low complexity" evidence="4">
    <location>
        <begin position="401"/>
        <end position="413"/>
    </location>
</feature>
<feature type="compositionally biased region" description="Low complexity" evidence="4">
    <location>
        <begin position="597"/>
        <end position="658"/>
    </location>
</feature>
<feature type="compositionally biased region" description="Basic and acidic residues" evidence="4">
    <location>
        <begin position="659"/>
        <end position="668"/>
    </location>
</feature>
<feature type="compositionally biased region" description="Low complexity" evidence="4">
    <location>
        <begin position="669"/>
        <end position="680"/>
    </location>
</feature>
<feature type="compositionally biased region" description="Basic and acidic residues" evidence="4">
    <location>
        <begin position="681"/>
        <end position="702"/>
    </location>
</feature>
<feature type="compositionally biased region" description="Low complexity" evidence="4">
    <location>
        <begin position="725"/>
        <end position="747"/>
    </location>
</feature>
<feature type="compositionally biased region" description="Low complexity" evidence="4">
    <location>
        <begin position="914"/>
        <end position="924"/>
    </location>
</feature>
<feature type="compositionally biased region" description="Basic and acidic residues" evidence="4">
    <location>
        <begin position="925"/>
        <end position="944"/>
    </location>
</feature>
<feature type="compositionally biased region" description="Basic and acidic residues" evidence="4">
    <location>
        <begin position="987"/>
        <end position="1001"/>
    </location>
</feature>
<feature type="compositionally biased region" description="Low complexity" evidence="4">
    <location>
        <begin position="1217"/>
        <end position="1241"/>
    </location>
</feature>
<feature type="compositionally biased region" description="Acidic residues" evidence="4">
    <location>
        <begin position="1400"/>
        <end position="1409"/>
    </location>
</feature>
<feature type="compositionally biased region" description="Basic and acidic residues" evidence="4">
    <location>
        <begin position="1410"/>
        <end position="1431"/>
    </location>
</feature>
<feature type="compositionally biased region" description="Basic and acidic residues" evidence="4">
    <location>
        <begin position="1622"/>
        <end position="1634"/>
    </location>
</feature>
<feature type="compositionally biased region" description="Low complexity" evidence="4">
    <location>
        <begin position="1644"/>
        <end position="1670"/>
    </location>
</feature>
<feature type="compositionally biased region" description="Low complexity" evidence="4">
    <location>
        <begin position="2471"/>
        <end position="2506"/>
    </location>
</feature>
<feature type="compositionally biased region" description="Low complexity" evidence="4">
    <location>
        <begin position="2705"/>
        <end position="2755"/>
    </location>
</feature>
<feature type="compositionally biased region" description="Low complexity" evidence="4">
    <location>
        <begin position="3430"/>
        <end position="3449"/>
    </location>
</feature>
<feature type="compositionally biased region" description="Low complexity" evidence="4">
    <location>
        <begin position="3613"/>
        <end position="3652"/>
    </location>
</feature>
<feature type="compositionally biased region" description="Low complexity" evidence="4">
    <location>
        <begin position="3794"/>
        <end position="3809"/>
    </location>
</feature>